<dbReference type="EMBL" id="CP001472">
    <property type="protein sequence ID" value="ACO32203.1"/>
    <property type="molecule type" value="Genomic_DNA"/>
</dbReference>
<dbReference type="RefSeq" id="WP_015897933.1">
    <property type="nucleotide sequence ID" value="NC_012483.1"/>
</dbReference>
<dbReference type="SMR" id="C1F3T7"/>
<dbReference type="FunCoup" id="C1F3T7">
    <property type="interactions" value="540"/>
</dbReference>
<dbReference type="STRING" id="240015.ACP_2876"/>
<dbReference type="KEGG" id="aca:ACP_2876"/>
<dbReference type="eggNOG" id="COG0231">
    <property type="taxonomic scope" value="Bacteria"/>
</dbReference>
<dbReference type="HOGENOM" id="CLU_074944_0_1_0"/>
<dbReference type="InParanoid" id="C1F3T7"/>
<dbReference type="OrthoDB" id="9801844at2"/>
<dbReference type="UniPathway" id="UPA00345"/>
<dbReference type="Proteomes" id="UP000002207">
    <property type="component" value="Chromosome"/>
</dbReference>
<dbReference type="GO" id="GO:0005737">
    <property type="term" value="C:cytoplasm"/>
    <property type="evidence" value="ECO:0007669"/>
    <property type="project" value="UniProtKB-SubCell"/>
</dbReference>
<dbReference type="GO" id="GO:0003746">
    <property type="term" value="F:translation elongation factor activity"/>
    <property type="evidence" value="ECO:0007669"/>
    <property type="project" value="UniProtKB-UniRule"/>
</dbReference>
<dbReference type="GO" id="GO:0043043">
    <property type="term" value="P:peptide biosynthetic process"/>
    <property type="evidence" value="ECO:0007669"/>
    <property type="project" value="InterPro"/>
</dbReference>
<dbReference type="CDD" id="cd04470">
    <property type="entry name" value="S1_EF-P_repeat_1"/>
    <property type="match status" value="1"/>
</dbReference>
<dbReference type="CDD" id="cd05794">
    <property type="entry name" value="S1_EF-P_repeat_2"/>
    <property type="match status" value="1"/>
</dbReference>
<dbReference type="FunFam" id="2.40.50.140:FF:000004">
    <property type="entry name" value="Elongation factor P"/>
    <property type="match status" value="1"/>
</dbReference>
<dbReference type="FunFam" id="2.40.50.140:FF:000009">
    <property type="entry name" value="Elongation factor P"/>
    <property type="match status" value="1"/>
</dbReference>
<dbReference type="Gene3D" id="2.30.30.30">
    <property type="match status" value="1"/>
</dbReference>
<dbReference type="Gene3D" id="2.40.50.140">
    <property type="entry name" value="Nucleic acid-binding proteins"/>
    <property type="match status" value="2"/>
</dbReference>
<dbReference type="HAMAP" id="MF_00141">
    <property type="entry name" value="EF_P"/>
    <property type="match status" value="1"/>
</dbReference>
<dbReference type="InterPro" id="IPR015365">
    <property type="entry name" value="Elong-fact-P_C"/>
</dbReference>
<dbReference type="InterPro" id="IPR012340">
    <property type="entry name" value="NA-bd_OB-fold"/>
</dbReference>
<dbReference type="InterPro" id="IPR014722">
    <property type="entry name" value="Rib_uL2_dom2"/>
</dbReference>
<dbReference type="InterPro" id="IPR020599">
    <property type="entry name" value="Transl_elong_fac_P/YeiP"/>
</dbReference>
<dbReference type="InterPro" id="IPR013185">
    <property type="entry name" value="Transl_elong_KOW-like"/>
</dbReference>
<dbReference type="InterPro" id="IPR001059">
    <property type="entry name" value="Transl_elong_P/YeiP_cen"/>
</dbReference>
<dbReference type="InterPro" id="IPR013852">
    <property type="entry name" value="Transl_elong_P/YeiP_CS"/>
</dbReference>
<dbReference type="InterPro" id="IPR011768">
    <property type="entry name" value="Transl_elongation_fac_P"/>
</dbReference>
<dbReference type="InterPro" id="IPR008991">
    <property type="entry name" value="Translation_prot_SH3-like_sf"/>
</dbReference>
<dbReference type="NCBIfam" id="TIGR00038">
    <property type="entry name" value="efp"/>
    <property type="match status" value="1"/>
</dbReference>
<dbReference type="NCBIfam" id="NF001810">
    <property type="entry name" value="PRK00529.1"/>
    <property type="match status" value="1"/>
</dbReference>
<dbReference type="PANTHER" id="PTHR30053">
    <property type="entry name" value="ELONGATION FACTOR P"/>
    <property type="match status" value="1"/>
</dbReference>
<dbReference type="PANTHER" id="PTHR30053:SF14">
    <property type="entry name" value="TRANSLATION ELONGATION FACTOR KOW-LIKE DOMAIN-CONTAINING PROTEIN"/>
    <property type="match status" value="1"/>
</dbReference>
<dbReference type="Pfam" id="PF01132">
    <property type="entry name" value="EFP"/>
    <property type="match status" value="1"/>
</dbReference>
<dbReference type="Pfam" id="PF08207">
    <property type="entry name" value="EFP_N"/>
    <property type="match status" value="1"/>
</dbReference>
<dbReference type="Pfam" id="PF09285">
    <property type="entry name" value="Elong-fact-P_C"/>
    <property type="match status" value="1"/>
</dbReference>
<dbReference type="PIRSF" id="PIRSF005901">
    <property type="entry name" value="EF-P"/>
    <property type="match status" value="1"/>
</dbReference>
<dbReference type="SMART" id="SM01185">
    <property type="entry name" value="EFP"/>
    <property type="match status" value="1"/>
</dbReference>
<dbReference type="SMART" id="SM00841">
    <property type="entry name" value="Elong-fact-P_C"/>
    <property type="match status" value="1"/>
</dbReference>
<dbReference type="SUPFAM" id="SSF50249">
    <property type="entry name" value="Nucleic acid-binding proteins"/>
    <property type="match status" value="2"/>
</dbReference>
<dbReference type="SUPFAM" id="SSF50104">
    <property type="entry name" value="Translation proteins SH3-like domain"/>
    <property type="match status" value="1"/>
</dbReference>
<dbReference type="PROSITE" id="PS01275">
    <property type="entry name" value="EFP"/>
    <property type="match status" value="1"/>
</dbReference>
<accession>C1F3T7</accession>
<sequence>MAIPATQMRPGMIIKHNGELHAVFSVEHRTPGNLRAFIQAKLRNLRSGAMFEHRFRSPDPIERVIVDEIPMEFLYNDGDDYYFMNTENFEQTHLKRDTLGDAVEYLTANLQITVSFFDGVAVGIELPQTVELTVVETEPGLKSATASSVTKPATLETGLVVQVPPFINEGEKIRVDTAEGAYLSRA</sequence>
<organism>
    <name type="scientific">Acidobacterium capsulatum (strain ATCC 51196 / DSM 11244 / BCRC 80197 / JCM 7670 / NBRC 15755 / NCIMB 13165 / 161)</name>
    <dbReference type="NCBI Taxonomy" id="240015"/>
    <lineage>
        <taxon>Bacteria</taxon>
        <taxon>Pseudomonadati</taxon>
        <taxon>Acidobacteriota</taxon>
        <taxon>Terriglobia</taxon>
        <taxon>Terriglobales</taxon>
        <taxon>Acidobacteriaceae</taxon>
        <taxon>Acidobacterium</taxon>
    </lineage>
</organism>
<comment type="function">
    <text evidence="1">Involved in peptide bond synthesis. Stimulates efficient translation and peptide-bond synthesis on native or reconstituted 70S ribosomes in vitro. Probably functions indirectly by altering the affinity of the ribosome for aminoacyl-tRNA, thus increasing their reactivity as acceptors for peptidyl transferase.</text>
</comment>
<comment type="pathway">
    <text evidence="1">Protein biosynthesis; polypeptide chain elongation.</text>
</comment>
<comment type="subcellular location">
    <subcellularLocation>
        <location evidence="1">Cytoplasm</location>
    </subcellularLocation>
</comment>
<comment type="similarity">
    <text evidence="1">Belongs to the elongation factor P family.</text>
</comment>
<keyword id="KW-0963">Cytoplasm</keyword>
<keyword id="KW-0251">Elongation factor</keyword>
<keyword id="KW-0648">Protein biosynthesis</keyword>
<keyword id="KW-1185">Reference proteome</keyword>
<evidence type="ECO:0000255" key="1">
    <source>
        <dbReference type="HAMAP-Rule" id="MF_00141"/>
    </source>
</evidence>
<feature type="chain" id="PRO_1000122981" description="Elongation factor P">
    <location>
        <begin position="1"/>
        <end position="186"/>
    </location>
</feature>
<gene>
    <name evidence="1" type="primary">efp</name>
    <name type="ordered locus">ACP_2876</name>
</gene>
<reference key="1">
    <citation type="journal article" date="2009" name="Appl. Environ. Microbiol.">
        <title>Three genomes from the phylum Acidobacteria provide insight into the lifestyles of these microorganisms in soils.</title>
        <authorList>
            <person name="Ward N.L."/>
            <person name="Challacombe J.F."/>
            <person name="Janssen P.H."/>
            <person name="Henrissat B."/>
            <person name="Coutinho P.M."/>
            <person name="Wu M."/>
            <person name="Xie G."/>
            <person name="Haft D.H."/>
            <person name="Sait M."/>
            <person name="Badger J."/>
            <person name="Barabote R.D."/>
            <person name="Bradley B."/>
            <person name="Brettin T.S."/>
            <person name="Brinkac L.M."/>
            <person name="Bruce D."/>
            <person name="Creasy T."/>
            <person name="Daugherty S.C."/>
            <person name="Davidsen T.M."/>
            <person name="DeBoy R.T."/>
            <person name="Detter J.C."/>
            <person name="Dodson R.J."/>
            <person name="Durkin A.S."/>
            <person name="Ganapathy A."/>
            <person name="Gwinn-Giglio M."/>
            <person name="Han C.S."/>
            <person name="Khouri H."/>
            <person name="Kiss H."/>
            <person name="Kothari S.P."/>
            <person name="Madupu R."/>
            <person name="Nelson K.E."/>
            <person name="Nelson W.C."/>
            <person name="Paulsen I."/>
            <person name="Penn K."/>
            <person name="Ren Q."/>
            <person name="Rosovitz M.J."/>
            <person name="Selengut J.D."/>
            <person name="Shrivastava S."/>
            <person name="Sullivan S.A."/>
            <person name="Tapia R."/>
            <person name="Thompson L.S."/>
            <person name="Watkins K.L."/>
            <person name="Yang Q."/>
            <person name="Yu C."/>
            <person name="Zafar N."/>
            <person name="Zhou L."/>
            <person name="Kuske C.R."/>
        </authorList>
    </citation>
    <scope>NUCLEOTIDE SEQUENCE [LARGE SCALE GENOMIC DNA]</scope>
    <source>
        <strain>ATCC 51196 / DSM 11244 / BCRC 80197 / JCM 7670 / NBRC 15755 / NCIMB 13165 / 161</strain>
    </source>
</reference>
<protein>
    <recommendedName>
        <fullName evidence="1">Elongation factor P</fullName>
        <shortName evidence="1">EF-P</shortName>
    </recommendedName>
</protein>
<proteinExistence type="inferred from homology"/>
<name>EFP_ACIC5</name>